<evidence type="ECO:0000255" key="1">
    <source>
        <dbReference type="HAMAP-Rule" id="MF_00022"/>
    </source>
</evidence>
<feature type="chain" id="PRO_0000367772" description="Glutamate--tRNA ligase 1">
    <location>
        <begin position="1"/>
        <end position="490"/>
    </location>
</feature>
<feature type="short sequence motif" description="'HIGH' region" evidence="1">
    <location>
        <begin position="27"/>
        <end position="37"/>
    </location>
</feature>
<feature type="short sequence motif" description="'KMSKS' region" evidence="1">
    <location>
        <begin position="254"/>
        <end position="258"/>
    </location>
</feature>
<feature type="binding site" evidence="1">
    <location>
        <position position="257"/>
    </location>
    <ligand>
        <name>ATP</name>
        <dbReference type="ChEBI" id="CHEBI:30616"/>
    </ligand>
</feature>
<sequence length="490" mass="53751">MATENPTRVATATPEATGADVVTRFAPSPTGYLHIGGARTALFNWLFARHHGGKFLLRIEDTDRARSTDAAIDAILDGMRWLELDWDGETVFQFARAPRHAEVAHDLLARGGAYRCYLTQDELAAMRAEAQEKRQPFRVRSPWRDRDDGDPAAPHVLRLRAPQDGAVTIADKVQGEVTVQNAELDDFILLRSDGTPTYMLSVVVDDNDMGVTHVIRGDDHLNNAFRQLALIRAMDWREPVYAHVPLIHGADGTKLSKRHGALGVDAYRDAMGYLPEAVNNYLLRLGWGHGDDEIISRAQAIEWFDLDHVGRSPSRFDFKKLENLNGHYLREADDARLAGLVAPRIEALVGRALDNADRDLLTQAMAALKPRAKTLGEIAEGATFLFAPDPMPVDEKAAEVLASAPEGLLAAMTQRLRGLDDDHWTSEDLEAAVRAEAEAAELGLGKLAQPLRAALTGRTVSPGIFDVLLLLGRKVSLARLDAAQHYPAGA</sequence>
<accession>Q1GUX4</accession>
<organism>
    <name type="scientific">Sphingopyxis alaskensis (strain DSM 13593 / LMG 18877 / RB2256)</name>
    <name type="common">Sphingomonas alaskensis</name>
    <dbReference type="NCBI Taxonomy" id="317655"/>
    <lineage>
        <taxon>Bacteria</taxon>
        <taxon>Pseudomonadati</taxon>
        <taxon>Pseudomonadota</taxon>
        <taxon>Alphaproteobacteria</taxon>
        <taxon>Sphingomonadales</taxon>
        <taxon>Sphingomonadaceae</taxon>
        <taxon>Sphingopyxis</taxon>
    </lineage>
</organism>
<gene>
    <name evidence="1" type="primary">gltX1</name>
    <name type="ordered locus">Sala_0830</name>
</gene>
<comment type="function">
    <text evidence="1">Catalyzes the attachment of glutamate to tRNA(Glu) in a two-step reaction: glutamate is first activated by ATP to form Glu-AMP and then transferred to the acceptor end of tRNA(Glu).</text>
</comment>
<comment type="catalytic activity">
    <reaction evidence="1">
        <text>tRNA(Glu) + L-glutamate + ATP = L-glutamyl-tRNA(Glu) + AMP + diphosphate</text>
        <dbReference type="Rhea" id="RHEA:23540"/>
        <dbReference type="Rhea" id="RHEA-COMP:9663"/>
        <dbReference type="Rhea" id="RHEA-COMP:9680"/>
        <dbReference type="ChEBI" id="CHEBI:29985"/>
        <dbReference type="ChEBI" id="CHEBI:30616"/>
        <dbReference type="ChEBI" id="CHEBI:33019"/>
        <dbReference type="ChEBI" id="CHEBI:78442"/>
        <dbReference type="ChEBI" id="CHEBI:78520"/>
        <dbReference type="ChEBI" id="CHEBI:456215"/>
        <dbReference type="EC" id="6.1.1.17"/>
    </reaction>
</comment>
<comment type="subunit">
    <text evidence="1">Monomer.</text>
</comment>
<comment type="subcellular location">
    <subcellularLocation>
        <location evidence="1">Cytoplasm</location>
    </subcellularLocation>
</comment>
<comment type="similarity">
    <text evidence="1">Belongs to the class-I aminoacyl-tRNA synthetase family. Glutamate--tRNA ligase type 1 subfamily.</text>
</comment>
<proteinExistence type="inferred from homology"/>
<dbReference type="EC" id="6.1.1.17" evidence="1"/>
<dbReference type="EMBL" id="CP000356">
    <property type="protein sequence ID" value="ABF52548.1"/>
    <property type="molecule type" value="Genomic_DNA"/>
</dbReference>
<dbReference type="RefSeq" id="WP_011541138.1">
    <property type="nucleotide sequence ID" value="NC_008048.1"/>
</dbReference>
<dbReference type="SMR" id="Q1GUX4"/>
<dbReference type="STRING" id="317655.Sala_0830"/>
<dbReference type="KEGG" id="sal:Sala_0830"/>
<dbReference type="eggNOG" id="COG0008">
    <property type="taxonomic scope" value="Bacteria"/>
</dbReference>
<dbReference type="HOGENOM" id="CLU_015768_6_3_5"/>
<dbReference type="OrthoDB" id="9807503at2"/>
<dbReference type="Proteomes" id="UP000006578">
    <property type="component" value="Chromosome"/>
</dbReference>
<dbReference type="GO" id="GO:0005829">
    <property type="term" value="C:cytosol"/>
    <property type="evidence" value="ECO:0007669"/>
    <property type="project" value="TreeGrafter"/>
</dbReference>
<dbReference type="GO" id="GO:0005524">
    <property type="term" value="F:ATP binding"/>
    <property type="evidence" value="ECO:0007669"/>
    <property type="project" value="UniProtKB-UniRule"/>
</dbReference>
<dbReference type="GO" id="GO:0004818">
    <property type="term" value="F:glutamate-tRNA ligase activity"/>
    <property type="evidence" value="ECO:0007669"/>
    <property type="project" value="UniProtKB-UniRule"/>
</dbReference>
<dbReference type="GO" id="GO:0000049">
    <property type="term" value="F:tRNA binding"/>
    <property type="evidence" value="ECO:0007669"/>
    <property type="project" value="InterPro"/>
</dbReference>
<dbReference type="GO" id="GO:0008270">
    <property type="term" value="F:zinc ion binding"/>
    <property type="evidence" value="ECO:0007669"/>
    <property type="project" value="InterPro"/>
</dbReference>
<dbReference type="GO" id="GO:0006424">
    <property type="term" value="P:glutamyl-tRNA aminoacylation"/>
    <property type="evidence" value="ECO:0007669"/>
    <property type="project" value="UniProtKB-UniRule"/>
</dbReference>
<dbReference type="CDD" id="cd00808">
    <property type="entry name" value="GluRS_core"/>
    <property type="match status" value="1"/>
</dbReference>
<dbReference type="FunFam" id="3.40.50.620:FF:000007">
    <property type="entry name" value="Glutamate--tRNA ligase"/>
    <property type="match status" value="1"/>
</dbReference>
<dbReference type="Gene3D" id="1.10.10.350">
    <property type="match status" value="1"/>
</dbReference>
<dbReference type="Gene3D" id="3.40.50.620">
    <property type="entry name" value="HUPs"/>
    <property type="match status" value="1"/>
</dbReference>
<dbReference type="HAMAP" id="MF_00022">
    <property type="entry name" value="Glu_tRNA_synth_type1"/>
    <property type="match status" value="1"/>
</dbReference>
<dbReference type="InterPro" id="IPR045462">
    <property type="entry name" value="aa-tRNA-synth_I_cd-bd"/>
</dbReference>
<dbReference type="InterPro" id="IPR020751">
    <property type="entry name" value="aa-tRNA-synth_I_codon-bd_sub2"/>
</dbReference>
<dbReference type="InterPro" id="IPR001412">
    <property type="entry name" value="aa-tRNA-synth_I_CS"/>
</dbReference>
<dbReference type="InterPro" id="IPR008925">
    <property type="entry name" value="aa_tRNA-synth_I_cd-bd_sf"/>
</dbReference>
<dbReference type="InterPro" id="IPR004527">
    <property type="entry name" value="Glu-tRNA-ligase_bac/mito"/>
</dbReference>
<dbReference type="InterPro" id="IPR000924">
    <property type="entry name" value="Glu/Gln-tRNA-synth"/>
</dbReference>
<dbReference type="InterPro" id="IPR020058">
    <property type="entry name" value="Glu/Gln-tRNA-synth_Ib_cat-dom"/>
</dbReference>
<dbReference type="InterPro" id="IPR049940">
    <property type="entry name" value="GluQ/Sye"/>
</dbReference>
<dbReference type="InterPro" id="IPR033910">
    <property type="entry name" value="GluRS_core"/>
</dbReference>
<dbReference type="InterPro" id="IPR014729">
    <property type="entry name" value="Rossmann-like_a/b/a_fold"/>
</dbReference>
<dbReference type="NCBIfam" id="TIGR00464">
    <property type="entry name" value="gltX_bact"/>
    <property type="match status" value="1"/>
</dbReference>
<dbReference type="PANTHER" id="PTHR43311">
    <property type="entry name" value="GLUTAMATE--TRNA LIGASE"/>
    <property type="match status" value="1"/>
</dbReference>
<dbReference type="PANTHER" id="PTHR43311:SF2">
    <property type="entry name" value="GLUTAMATE--TRNA LIGASE, MITOCHONDRIAL-RELATED"/>
    <property type="match status" value="1"/>
</dbReference>
<dbReference type="Pfam" id="PF19269">
    <property type="entry name" value="Anticodon_2"/>
    <property type="match status" value="1"/>
</dbReference>
<dbReference type="Pfam" id="PF00749">
    <property type="entry name" value="tRNA-synt_1c"/>
    <property type="match status" value="1"/>
</dbReference>
<dbReference type="PRINTS" id="PR00987">
    <property type="entry name" value="TRNASYNTHGLU"/>
</dbReference>
<dbReference type="SUPFAM" id="SSF48163">
    <property type="entry name" value="An anticodon-binding domain of class I aminoacyl-tRNA synthetases"/>
    <property type="match status" value="1"/>
</dbReference>
<dbReference type="SUPFAM" id="SSF52374">
    <property type="entry name" value="Nucleotidylyl transferase"/>
    <property type="match status" value="1"/>
</dbReference>
<dbReference type="PROSITE" id="PS00178">
    <property type="entry name" value="AA_TRNA_LIGASE_I"/>
    <property type="match status" value="1"/>
</dbReference>
<protein>
    <recommendedName>
        <fullName evidence="1">Glutamate--tRNA ligase 1</fullName>
        <ecNumber evidence="1">6.1.1.17</ecNumber>
    </recommendedName>
    <alternativeName>
        <fullName evidence="1">Glutamyl-tRNA synthetase 1</fullName>
        <shortName evidence="1">GluRS 1</shortName>
    </alternativeName>
</protein>
<name>SYE1_SPHAL</name>
<keyword id="KW-0030">Aminoacyl-tRNA synthetase</keyword>
<keyword id="KW-0067">ATP-binding</keyword>
<keyword id="KW-0963">Cytoplasm</keyword>
<keyword id="KW-0436">Ligase</keyword>
<keyword id="KW-0547">Nucleotide-binding</keyword>
<keyword id="KW-0648">Protein biosynthesis</keyword>
<keyword id="KW-1185">Reference proteome</keyword>
<reference key="1">
    <citation type="journal article" date="2009" name="Proc. Natl. Acad. Sci. U.S.A.">
        <title>The genomic basis of trophic strategy in marine bacteria.</title>
        <authorList>
            <person name="Lauro F.M."/>
            <person name="McDougald D."/>
            <person name="Thomas T."/>
            <person name="Williams T.J."/>
            <person name="Egan S."/>
            <person name="Rice S."/>
            <person name="DeMaere M.Z."/>
            <person name="Ting L."/>
            <person name="Ertan H."/>
            <person name="Johnson J."/>
            <person name="Ferriera S."/>
            <person name="Lapidus A."/>
            <person name="Anderson I."/>
            <person name="Kyrpides N."/>
            <person name="Munk A.C."/>
            <person name="Detter C."/>
            <person name="Han C.S."/>
            <person name="Brown M.V."/>
            <person name="Robb F.T."/>
            <person name="Kjelleberg S."/>
            <person name="Cavicchioli R."/>
        </authorList>
    </citation>
    <scope>NUCLEOTIDE SEQUENCE [LARGE SCALE GENOMIC DNA]</scope>
    <source>
        <strain>DSM 13593 / LMG 18877 / RB2256</strain>
    </source>
</reference>